<reference key="1">
    <citation type="submission" date="2006-09" db="EMBL/GenBank/DDBJ databases">
        <authorList>
            <consortium name="The Klebsiella pneumonia Genome Sequencing Project"/>
            <person name="McClelland M."/>
            <person name="Sanderson E.K."/>
            <person name="Spieth J."/>
            <person name="Clifton W.S."/>
            <person name="Latreille P."/>
            <person name="Sabo A."/>
            <person name="Pepin K."/>
            <person name="Bhonagiri V."/>
            <person name="Porwollik S."/>
            <person name="Ali J."/>
            <person name="Wilson R.K."/>
        </authorList>
    </citation>
    <scope>NUCLEOTIDE SEQUENCE [LARGE SCALE GENOMIC DNA]</scope>
    <source>
        <strain>ATCC 700721 / MGH 78578</strain>
    </source>
</reference>
<keyword id="KW-0521">NADP</keyword>
<keyword id="KW-0554">One-carbon metabolism</keyword>
<keyword id="KW-0560">Oxidoreductase</keyword>
<organism>
    <name type="scientific">Klebsiella pneumoniae subsp. pneumoniae (strain ATCC 700721 / MGH 78578)</name>
    <dbReference type="NCBI Taxonomy" id="272620"/>
    <lineage>
        <taxon>Bacteria</taxon>
        <taxon>Pseudomonadati</taxon>
        <taxon>Pseudomonadota</taxon>
        <taxon>Gammaproteobacteria</taxon>
        <taxon>Enterobacterales</taxon>
        <taxon>Enterobacteriaceae</taxon>
        <taxon>Klebsiella/Raoultella group</taxon>
        <taxon>Klebsiella</taxon>
        <taxon>Klebsiella pneumoniae complex</taxon>
    </lineage>
</organism>
<protein>
    <recommendedName>
        <fullName>Dihydromonapterin reductase</fullName>
        <shortName>H(2)-MPt reductase</shortName>
        <ecNumber evidence="1">1.5.1.50</ecNumber>
    </recommendedName>
    <alternativeName>
        <fullName>Dihydrofolate reductase</fullName>
        <shortName>DHFR</shortName>
        <ecNumber evidence="1">1.5.1.3</ecNumber>
    </alternativeName>
</protein>
<dbReference type="EC" id="1.5.1.50" evidence="1"/>
<dbReference type="EC" id="1.5.1.3" evidence="1"/>
<dbReference type="EMBL" id="CP000647">
    <property type="protein sequence ID" value="ABR76954.1"/>
    <property type="molecule type" value="Genomic_DNA"/>
</dbReference>
<dbReference type="RefSeq" id="WP_004176334.1">
    <property type="nucleotide sequence ID" value="NC_009648.1"/>
</dbReference>
<dbReference type="SMR" id="A6T8N3"/>
<dbReference type="STRING" id="272620.KPN_01523"/>
<dbReference type="PaxDb" id="272620-KPN_01523"/>
<dbReference type="EnsemblBacteria" id="ABR76954">
    <property type="protein sequence ID" value="ABR76954"/>
    <property type="gene ID" value="KPN_01523"/>
</dbReference>
<dbReference type="KEGG" id="kpn:KPN_01523"/>
<dbReference type="HOGENOM" id="CLU_010194_1_3_6"/>
<dbReference type="Proteomes" id="UP000000265">
    <property type="component" value="Chromosome"/>
</dbReference>
<dbReference type="GO" id="GO:0004146">
    <property type="term" value="F:dihydrofolate reductase activity"/>
    <property type="evidence" value="ECO:0007669"/>
    <property type="project" value="UniProtKB-EC"/>
</dbReference>
<dbReference type="GO" id="GO:0006730">
    <property type="term" value="P:one-carbon metabolic process"/>
    <property type="evidence" value="ECO:0007669"/>
    <property type="project" value="UniProtKB-KW"/>
</dbReference>
<dbReference type="Gene3D" id="3.40.50.720">
    <property type="entry name" value="NAD(P)-binding Rossmann-like Domain"/>
    <property type="match status" value="1"/>
</dbReference>
<dbReference type="InterPro" id="IPR036291">
    <property type="entry name" value="NAD(P)-bd_dom_sf"/>
</dbReference>
<dbReference type="InterPro" id="IPR020904">
    <property type="entry name" value="Sc_DH/Rdtase_CS"/>
</dbReference>
<dbReference type="InterPro" id="IPR002347">
    <property type="entry name" value="SDR_fam"/>
</dbReference>
<dbReference type="NCBIfam" id="NF005066">
    <property type="entry name" value="PRK06483.1"/>
    <property type="match status" value="1"/>
</dbReference>
<dbReference type="PANTHER" id="PTHR43639:SF6">
    <property type="entry name" value="DIHYDROMONAPTERIN REDUCTASE"/>
    <property type="match status" value="1"/>
</dbReference>
<dbReference type="PANTHER" id="PTHR43639">
    <property type="entry name" value="OXIDOREDUCTASE, SHORT-CHAIN DEHYDROGENASE/REDUCTASE FAMILY (AFU_ORTHOLOGUE AFUA_5G02870)"/>
    <property type="match status" value="1"/>
</dbReference>
<dbReference type="Pfam" id="PF13561">
    <property type="entry name" value="adh_short_C2"/>
    <property type="match status" value="1"/>
</dbReference>
<dbReference type="PRINTS" id="PR00081">
    <property type="entry name" value="GDHRDH"/>
</dbReference>
<dbReference type="SUPFAM" id="SSF51735">
    <property type="entry name" value="NAD(P)-binding Rossmann-fold domains"/>
    <property type="match status" value="1"/>
</dbReference>
<dbReference type="PROSITE" id="PS00061">
    <property type="entry name" value="ADH_SHORT"/>
    <property type="match status" value="1"/>
</dbReference>
<comment type="function">
    <text evidence="1">Catalyzes the reduction of dihydromonapterin to tetrahydromonapterin. Also has lower activity with dihydrofolate.</text>
</comment>
<comment type="catalytic activity">
    <reaction evidence="1">
        <text>(6S)-5,6,7,8-tetrahydrofolate + NADP(+) = 7,8-dihydrofolate + NADPH + H(+)</text>
        <dbReference type="Rhea" id="RHEA:15009"/>
        <dbReference type="ChEBI" id="CHEBI:15378"/>
        <dbReference type="ChEBI" id="CHEBI:57451"/>
        <dbReference type="ChEBI" id="CHEBI:57453"/>
        <dbReference type="ChEBI" id="CHEBI:57783"/>
        <dbReference type="ChEBI" id="CHEBI:58349"/>
        <dbReference type="EC" id="1.5.1.3"/>
    </reaction>
</comment>
<comment type="catalytic activity">
    <reaction evidence="1">
        <text>7,8-dihydromonapterin + NADPH + H(+) = 5,6,7,8-tetrahydromonapterin + NADP(+)</text>
        <dbReference type="Rhea" id="RHEA:34847"/>
        <dbReference type="ChEBI" id="CHEBI:15378"/>
        <dbReference type="ChEBI" id="CHEBI:57783"/>
        <dbReference type="ChEBI" id="CHEBI:58349"/>
        <dbReference type="ChEBI" id="CHEBI:71175"/>
        <dbReference type="ChEBI" id="CHEBI:71177"/>
        <dbReference type="EC" id="1.5.1.50"/>
    </reaction>
</comment>
<comment type="similarity">
    <text evidence="3">Belongs to the short-chain dehydrogenases/reductases (SDR) family. FolM subfamily.</text>
</comment>
<feature type="chain" id="PRO_0000339398" description="Dihydromonapterin reductase">
    <location>
        <begin position="1"/>
        <end position="240"/>
    </location>
</feature>
<feature type="active site" description="Proton acceptor" evidence="2">
    <location>
        <position position="152"/>
    </location>
</feature>
<name>FOLM_KLEP7</name>
<accession>A6T8N3</accession>
<gene>
    <name type="primary">folM</name>
    <name type="ordered locus">KPN78578_14930</name>
    <name type="ORF">KPN_01523</name>
</gene>
<evidence type="ECO:0000250" key="1">
    <source>
        <dbReference type="UniProtKB" id="P0AFS3"/>
    </source>
</evidence>
<evidence type="ECO:0000255" key="2">
    <source>
        <dbReference type="PROSITE-ProRule" id="PRU10001"/>
    </source>
</evidence>
<evidence type="ECO:0000305" key="3"/>
<sequence>MAEQQPRPILITGAGRRIGLALAHHFLQQRQPVIVSYRTPYPAIDGLREAGALCLQADFSSDDGILTFAEAVKSHTDGLRAIIHNASDWMAEKPGVPLSTVINRMMQIHVHAPYLLNHALEALLRGHGHAASDIIHITDYVVERGSDKHIAYAASKAALDNMTRSFARKLAPEVKVNAIAPSLIMFNEGDDEAYRQQALDKSLMKIAPGEKEISDLIDYLFTSRYVTGRSFAVDGGRPLR</sequence>
<proteinExistence type="inferred from homology"/>